<keyword id="KW-0167">Capsid protein</keyword>
<keyword id="KW-1048">Host nucleus</keyword>
<keyword id="KW-0945">Host-virus interaction</keyword>
<keyword id="KW-1185">Reference proteome</keyword>
<keyword id="KW-0231">Viral genome packaging</keyword>
<keyword id="KW-1163">Viral penetration into host nucleus</keyword>
<keyword id="KW-1188">Viral release from host cell</keyword>
<keyword id="KW-0946">Virion</keyword>
<keyword id="KW-1160">Virus entry into host cell</keyword>
<dbReference type="EMBL" id="U20824">
    <property type="protein sequence ID" value="AAC13806.1"/>
    <property type="molecule type" value="Genomic_DNA"/>
</dbReference>
<dbReference type="PIR" id="S55613">
    <property type="entry name" value="S55613"/>
</dbReference>
<dbReference type="SMR" id="Q66622"/>
<dbReference type="KEGG" id="vg:1461017"/>
<dbReference type="Proteomes" id="UP000007083">
    <property type="component" value="Segment"/>
</dbReference>
<dbReference type="GO" id="GO:0043657">
    <property type="term" value="C:host cell"/>
    <property type="evidence" value="ECO:0007669"/>
    <property type="project" value="GOC"/>
</dbReference>
<dbReference type="GO" id="GO:0042025">
    <property type="term" value="C:host cell nucleus"/>
    <property type="evidence" value="ECO:0007669"/>
    <property type="project" value="UniProtKB-SubCell"/>
</dbReference>
<dbReference type="GO" id="GO:0019028">
    <property type="term" value="C:viral capsid"/>
    <property type="evidence" value="ECO:0007669"/>
    <property type="project" value="UniProtKB-KW"/>
</dbReference>
<dbReference type="GO" id="GO:0046718">
    <property type="term" value="P:symbiont entry into host cell"/>
    <property type="evidence" value="ECO:0007669"/>
    <property type="project" value="UniProtKB-KW"/>
</dbReference>
<dbReference type="GO" id="GO:0019072">
    <property type="term" value="P:viral genome packaging"/>
    <property type="evidence" value="ECO:0007669"/>
    <property type="project" value="InterPro"/>
</dbReference>
<dbReference type="GO" id="GO:0075732">
    <property type="term" value="P:viral penetration into host nucleus"/>
    <property type="evidence" value="ECO:0007669"/>
    <property type="project" value="UniProtKB-KW"/>
</dbReference>
<dbReference type="HAMAP" id="MF_04025">
    <property type="entry name" value="HSV_CVC2"/>
    <property type="match status" value="1"/>
</dbReference>
<dbReference type="InterPro" id="IPR002493">
    <property type="entry name" value="Herpes_UL25"/>
</dbReference>
<dbReference type="Pfam" id="PF01499">
    <property type="entry name" value="Herpes_UL25"/>
    <property type="match status" value="1"/>
</dbReference>
<sequence>MQAARKRWPPSVAFWSPSPKHYVRVDRDSLRETRRLASSLRRNALAARVARVKAGMLRAELGNLSQLQIAHAHGVLADLARLEQATALHVAGDGRGSGNPPTSPGQGHPLSWGNSDSHGGGGGPGGGGGGELLITISPDGPTFSVKDDFRTEFISGLYTRQSQWLPFYGPWYAAMTDSAMQRRVFPKELKGNVNFQNSTSLKLMTGLLEVLASATEDFYTDGRNLSDVNAALCLLNGYYCLRTPAPLPSTYGELLADLDKKMEFLIADLKRDASNTDFSFAFSNPRQLETVAPLNRQGAYAPDFFGRHKMFAVMSDAGMFPNTKQTAASAQDPGARDIVYLITNAVFGENVPPFITYQLNLRTGLKALELLIVVYIVLENAHVQHNTVNRRLQLPALLGDQYKRPAAQRPQPQQPAAMFKKGFLFSFVVKNYMVPVLTRRPQTPASSLFPGAVLLALETADAASAGGGSGQTLGGHLINLSGKKYDQLFDVLNQKLTFRDVQGLIGAQTALRLTLERGLNLLLSKPSPLTSATEVISTQFGGGDDYDSLYFLILGCLPVTMAVV</sequence>
<reference key="1">
    <citation type="journal article" date="1995" name="J. Mol. Biol.">
        <title>The DNA sequence of equine herpesvirus 2.</title>
        <authorList>
            <person name="Telford E.A.R."/>
            <person name="Watson M.S."/>
            <person name="Aird H.C."/>
            <person name="Perry J."/>
            <person name="Davison A.J."/>
        </authorList>
    </citation>
    <scope>NUCLEOTIDE SEQUENCE [LARGE SCALE GENOMIC DNA]</scope>
</reference>
<organismHost>
    <name type="scientific">Equus caballus</name>
    <name type="common">Horse</name>
    <dbReference type="NCBI Taxonomy" id="9796"/>
</organismHost>
<feature type="chain" id="PRO_0000406169" description="Capsid vertex component 2">
    <location>
        <begin position="1"/>
        <end position="564"/>
    </location>
</feature>
<feature type="region of interest" description="Interaction with major capsid protein/MCP" evidence="1">
    <location>
        <begin position="1"/>
        <end position="45"/>
    </location>
</feature>
<feature type="region of interest" description="Disordered" evidence="2">
    <location>
        <begin position="91"/>
        <end position="133"/>
    </location>
</feature>
<feature type="compositionally biased region" description="Gly residues" evidence="2">
    <location>
        <begin position="118"/>
        <end position="131"/>
    </location>
</feature>
<proteinExistence type="inferred from homology"/>
<accession>Q66622</accession>
<name>CVC2_EHV2</name>
<gene>
    <name evidence="1" type="primary">CVC2</name>
    <name type="ordered locus">19</name>
</gene>
<comment type="function">
    <text evidence="1">Capsid vertex-specific component that plays a role during viral DNA encapsidation, assuring correct genome cleavage and presumably stabilizing capsids that contain full-length viral genomes. Participates in the interaction between the capsid and the tegument through interaction with the large tegument protein/LTP.</text>
</comment>
<comment type="subunit">
    <text evidence="1">Heterodimerizes with CVC1. Interacts with major capsid protein/MCP and triplex capsid protein 1/TRX1 at the pentamer vertices. Interacts with the large tegument protein/LTP.</text>
</comment>
<comment type="subcellular location">
    <subcellularLocation>
        <location evidence="1">Virion</location>
    </subcellularLocation>
    <subcellularLocation>
        <location evidence="1">Host nucleus</location>
    </subcellularLocation>
</comment>
<comment type="similarity">
    <text evidence="1">Belongs to the herpesviridae CVC2 protein family.</text>
</comment>
<protein>
    <recommendedName>
        <fullName evidence="1">Capsid vertex component 2</fullName>
    </recommendedName>
</protein>
<evidence type="ECO:0000255" key="1">
    <source>
        <dbReference type="HAMAP-Rule" id="MF_04025"/>
    </source>
</evidence>
<evidence type="ECO:0000256" key="2">
    <source>
        <dbReference type="SAM" id="MobiDB-lite"/>
    </source>
</evidence>
<organism>
    <name type="scientific">Equine herpesvirus 2 (strain 86/87)</name>
    <name type="common">EHV-2</name>
    <dbReference type="NCBI Taxonomy" id="82831"/>
    <lineage>
        <taxon>Viruses</taxon>
        <taxon>Duplodnaviria</taxon>
        <taxon>Heunggongvirae</taxon>
        <taxon>Peploviricota</taxon>
        <taxon>Herviviricetes</taxon>
        <taxon>Herpesvirales</taxon>
        <taxon>Orthoherpesviridae</taxon>
        <taxon>Gammaherpesvirinae</taxon>
        <taxon>Percavirus</taxon>
        <taxon>Percavirus equidgamma2</taxon>
        <taxon>Equid gammaherpesvirus 2</taxon>
    </lineage>
</organism>